<name>IBPA_ECO27</name>
<protein>
    <recommendedName>
        <fullName evidence="1">Small heat shock protein IbpA</fullName>
    </recommendedName>
    <alternativeName>
        <fullName evidence="1">16 kDa heat shock protein A</fullName>
    </alternativeName>
</protein>
<keyword id="KW-0143">Chaperone</keyword>
<keyword id="KW-0963">Cytoplasm</keyword>
<keyword id="KW-1185">Reference proteome</keyword>
<keyword id="KW-0346">Stress response</keyword>
<evidence type="ECO:0000255" key="1">
    <source>
        <dbReference type="HAMAP-Rule" id="MF_02000"/>
    </source>
</evidence>
<evidence type="ECO:0000255" key="2">
    <source>
        <dbReference type="PROSITE-ProRule" id="PRU00285"/>
    </source>
</evidence>
<proteinExistence type="inferred from homology"/>
<feature type="chain" id="PRO_1000189076" description="Small heat shock protein IbpA">
    <location>
        <begin position="1"/>
        <end position="137"/>
    </location>
</feature>
<feature type="domain" description="sHSP" evidence="2">
    <location>
        <begin position="28"/>
        <end position="137"/>
    </location>
</feature>
<dbReference type="EMBL" id="FM180568">
    <property type="protein sequence ID" value="CAS11545.1"/>
    <property type="molecule type" value="Genomic_DNA"/>
</dbReference>
<dbReference type="RefSeq" id="WP_001243437.1">
    <property type="nucleotide sequence ID" value="NC_011601.1"/>
</dbReference>
<dbReference type="SMR" id="B7UMF4"/>
<dbReference type="GeneID" id="93778428"/>
<dbReference type="KEGG" id="ecg:E2348C_3997"/>
<dbReference type="HOGENOM" id="CLU_046737_4_2_6"/>
<dbReference type="Proteomes" id="UP000008205">
    <property type="component" value="Chromosome"/>
</dbReference>
<dbReference type="GO" id="GO:0005737">
    <property type="term" value="C:cytoplasm"/>
    <property type="evidence" value="ECO:0007669"/>
    <property type="project" value="UniProtKB-SubCell"/>
</dbReference>
<dbReference type="GO" id="GO:0050821">
    <property type="term" value="P:protein stabilization"/>
    <property type="evidence" value="ECO:0007669"/>
    <property type="project" value="UniProtKB-UniRule"/>
</dbReference>
<dbReference type="CDD" id="cd06470">
    <property type="entry name" value="ACD_IbpA-B_like"/>
    <property type="match status" value="1"/>
</dbReference>
<dbReference type="FunFam" id="2.60.40.790:FF:000002">
    <property type="entry name" value="Small heat shock protein IbpA"/>
    <property type="match status" value="1"/>
</dbReference>
<dbReference type="Gene3D" id="2.60.40.790">
    <property type="match status" value="1"/>
</dbReference>
<dbReference type="HAMAP" id="MF_02000">
    <property type="entry name" value="HSP20_IbpA"/>
    <property type="match status" value="1"/>
</dbReference>
<dbReference type="InterPro" id="IPR002068">
    <property type="entry name" value="A-crystallin/Hsp20_dom"/>
</dbReference>
<dbReference type="InterPro" id="IPR037913">
    <property type="entry name" value="ACD_IbpA/B"/>
</dbReference>
<dbReference type="InterPro" id="IPR008978">
    <property type="entry name" value="HSP20-like_chaperone"/>
</dbReference>
<dbReference type="InterPro" id="IPR023728">
    <property type="entry name" value="HSP20_IbpA"/>
</dbReference>
<dbReference type="NCBIfam" id="NF008013">
    <property type="entry name" value="PRK10743.1"/>
    <property type="match status" value="1"/>
</dbReference>
<dbReference type="PANTHER" id="PTHR47062">
    <property type="match status" value="1"/>
</dbReference>
<dbReference type="PANTHER" id="PTHR47062:SF1">
    <property type="entry name" value="SMALL HEAT SHOCK PROTEIN IBPA"/>
    <property type="match status" value="1"/>
</dbReference>
<dbReference type="Pfam" id="PF00011">
    <property type="entry name" value="HSP20"/>
    <property type="match status" value="1"/>
</dbReference>
<dbReference type="SUPFAM" id="SSF49764">
    <property type="entry name" value="HSP20-like chaperones"/>
    <property type="match status" value="1"/>
</dbReference>
<dbReference type="PROSITE" id="PS01031">
    <property type="entry name" value="SHSP"/>
    <property type="match status" value="1"/>
</dbReference>
<comment type="function">
    <text evidence="1">Associates with aggregated proteins, together with IbpB, to stabilize and protect them from irreversible denaturation and extensive proteolysis during heat shock and oxidative stress. Aggregated proteins bound to the IbpAB complex are more efficiently refolded and reactivated by the ATP-dependent chaperone systems ClpB and DnaK/DnaJ/GrpE. Its activity is ATP-independent.</text>
</comment>
<comment type="subunit">
    <text evidence="1">Monomer. Forms homomultimers of about 100-150 subunits at optimal growth temperatures. Conformation changes to monomers at high temperatures or high ionic concentrations.</text>
</comment>
<comment type="subcellular location">
    <subcellularLocation>
        <location evidence="1">Cytoplasm</location>
    </subcellularLocation>
</comment>
<comment type="similarity">
    <text evidence="1 2">Belongs to the small heat shock protein (HSP20) family.</text>
</comment>
<organism>
    <name type="scientific">Escherichia coli O127:H6 (strain E2348/69 / EPEC)</name>
    <dbReference type="NCBI Taxonomy" id="574521"/>
    <lineage>
        <taxon>Bacteria</taxon>
        <taxon>Pseudomonadati</taxon>
        <taxon>Pseudomonadota</taxon>
        <taxon>Gammaproteobacteria</taxon>
        <taxon>Enterobacterales</taxon>
        <taxon>Enterobacteriaceae</taxon>
        <taxon>Escherichia</taxon>
    </lineage>
</organism>
<accession>B7UMF4</accession>
<sequence>MRNFDLSPLYRSAIGFDRLFNHLENNQSQSNGGYPPYNVELVDENHYRIAIAVAGFAESELEITAQDNLLVVKGAHADEQKERTYLYQGIAERNFERKFQLAENIHVRGANLVNGLLYIDLERVIPEAKKPRRIEIN</sequence>
<gene>
    <name evidence="1" type="primary">ibpA</name>
    <name type="ordered locus">E2348C_3997</name>
</gene>
<reference key="1">
    <citation type="journal article" date="2009" name="J. Bacteriol.">
        <title>Complete genome sequence and comparative genome analysis of enteropathogenic Escherichia coli O127:H6 strain E2348/69.</title>
        <authorList>
            <person name="Iguchi A."/>
            <person name="Thomson N.R."/>
            <person name="Ogura Y."/>
            <person name="Saunders D."/>
            <person name="Ooka T."/>
            <person name="Henderson I.R."/>
            <person name="Harris D."/>
            <person name="Asadulghani M."/>
            <person name="Kurokawa K."/>
            <person name="Dean P."/>
            <person name="Kenny B."/>
            <person name="Quail M.A."/>
            <person name="Thurston S."/>
            <person name="Dougan G."/>
            <person name="Hayashi T."/>
            <person name="Parkhill J."/>
            <person name="Frankel G."/>
        </authorList>
    </citation>
    <scope>NUCLEOTIDE SEQUENCE [LARGE SCALE GENOMIC DNA]</scope>
    <source>
        <strain>E2348/69 / EPEC</strain>
    </source>
</reference>